<organism>
    <name type="scientific">Streptococcus pyogenes serotype M3 (strain ATCC BAA-595 / MGAS315)</name>
    <dbReference type="NCBI Taxonomy" id="198466"/>
    <lineage>
        <taxon>Bacteria</taxon>
        <taxon>Bacillati</taxon>
        <taxon>Bacillota</taxon>
        <taxon>Bacilli</taxon>
        <taxon>Lactobacillales</taxon>
        <taxon>Streptococcaceae</taxon>
        <taxon>Streptococcus</taxon>
    </lineage>
</organism>
<comment type="function">
    <text evidence="1">Can catalyze the hydrolysis of ATP in the presence of single-stranded DNA, the ATP-dependent uptake of single-stranded DNA by duplex DNA, and the ATP-dependent hybridization of homologous single-stranded DNAs. It interacts with LexA causing its activation and leading to its autocatalytic cleavage.</text>
</comment>
<comment type="subcellular location">
    <subcellularLocation>
        <location evidence="1">Cytoplasm</location>
    </subcellularLocation>
</comment>
<comment type="similarity">
    <text evidence="1">Belongs to the RecA family.</text>
</comment>
<comment type="sequence caution" evidence="2">
    <conflict type="erroneous initiation">
        <sequence resource="EMBL-CDS" id="AAM80407"/>
    </conflict>
</comment>
<keyword id="KW-0067">ATP-binding</keyword>
<keyword id="KW-0963">Cytoplasm</keyword>
<keyword id="KW-0227">DNA damage</keyword>
<keyword id="KW-0233">DNA recombination</keyword>
<keyword id="KW-0234">DNA repair</keyword>
<keyword id="KW-0238">DNA-binding</keyword>
<keyword id="KW-0547">Nucleotide-binding</keyword>
<keyword id="KW-0742">SOS response</keyword>
<feature type="chain" id="PRO_0000122862" description="Protein RecA">
    <location>
        <begin position="1"/>
        <end position="378"/>
    </location>
</feature>
<feature type="binding site" evidence="1">
    <location>
        <begin position="79"/>
        <end position="86"/>
    </location>
    <ligand>
        <name>ATP</name>
        <dbReference type="ChEBI" id="CHEBI:30616"/>
    </ligand>
</feature>
<evidence type="ECO:0000255" key="1">
    <source>
        <dbReference type="HAMAP-Rule" id="MF_00268"/>
    </source>
</evidence>
<evidence type="ECO:0000305" key="2"/>
<protein>
    <recommendedName>
        <fullName evidence="1">Protein RecA</fullName>
    </recommendedName>
    <alternativeName>
        <fullName evidence="1">Recombinase A</fullName>
    </alternativeName>
</protein>
<accession>P0DD82</accession>
<accession>Q8K5K0</accession>
<reference key="1">
    <citation type="journal article" date="2002" name="Proc. Natl. Acad. Sci. U.S.A.">
        <title>Genome sequence of a serotype M3 strain of group A Streptococcus: phage-encoded toxins, the high-virulence phenotype, and clone emergence.</title>
        <authorList>
            <person name="Beres S.B."/>
            <person name="Sylva G.L."/>
            <person name="Barbian K.D."/>
            <person name="Lei B."/>
            <person name="Hoff J.S."/>
            <person name="Mammarella N.D."/>
            <person name="Liu M.-Y."/>
            <person name="Smoot J.C."/>
            <person name="Porcella S.F."/>
            <person name="Parkins L.D."/>
            <person name="Campbell D.S."/>
            <person name="Smith T.M."/>
            <person name="McCormick J.K."/>
            <person name="Leung D.Y.M."/>
            <person name="Schlievert P.M."/>
            <person name="Musser J.M."/>
        </authorList>
    </citation>
    <scope>NUCLEOTIDE SEQUENCE [LARGE SCALE GENOMIC DNA]</scope>
    <source>
        <strain>ATCC BAA-595 / MGAS315</strain>
    </source>
</reference>
<proteinExistence type="inferred from homology"/>
<gene>
    <name evidence="1" type="primary">recA</name>
    <name type="ordered locus">SpyM3_1800</name>
</gene>
<name>RECA_STRP3</name>
<sequence>MAKKLKKNEEITKKFGDERRKALDDALKNIEKDFGKGAVMRLGERAEQKVQVMSSGSLALDIALGAGGYPKGRIIEIYGPESSGKTTVALHAVAQAQKEGGIAAFIDAEHALDPAYAAALGVNIDELLLSQPDSGEQGLEIAGKLIDSGAVDLVVVDSVAALVPRAEIDGDIGDSHVGLQARMMSQAMRKLSASINKTKTIAIFINQLREKVGVMFGNPETTPGGRALKFYASVRLDVRGTTQIKGTGDQKDSSIGKETKIKVVKNKVAPPFKVAEVEIMYGEGISRTGELVKIASDLDIIQKAGAWFSYNGEKIGQGSENAKRYLADHPQLFDEIDRKVRVKFGLLEESEEESAMAVASEETDDLALDLDNGIEIED</sequence>
<dbReference type="EMBL" id="AE014074">
    <property type="protein sequence ID" value="AAM80407.1"/>
    <property type="status" value="ALT_INIT"/>
    <property type="molecule type" value="Genomic_DNA"/>
</dbReference>
<dbReference type="RefSeq" id="WP_002992179.1">
    <property type="nucleotide sequence ID" value="NC_004070.1"/>
</dbReference>
<dbReference type="SMR" id="P0DD82"/>
<dbReference type="GeneID" id="69901570"/>
<dbReference type="KEGG" id="spg:SpyM3_1800"/>
<dbReference type="HOGENOM" id="CLU_040469_1_2_9"/>
<dbReference type="Proteomes" id="UP000000564">
    <property type="component" value="Chromosome"/>
</dbReference>
<dbReference type="GO" id="GO:0005829">
    <property type="term" value="C:cytosol"/>
    <property type="evidence" value="ECO:0007669"/>
    <property type="project" value="TreeGrafter"/>
</dbReference>
<dbReference type="GO" id="GO:0005524">
    <property type="term" value="F:ATP binding"/>
    <property type="evidence" value="ECO:0007669"/>
    <property type="project" value="UniProtKB-UniRule"/>
</dbReference>
<dbReference type="GO" id="GO:0016887">
    <property type="term" value="F:ATP hydrolysis activity"/>
    <property type="evidence" value="ECO:0007669"/>
    <property type="project" value="InterPro"/>
</dbReference>
<dbReference type="GO" id="GO:0140664">
    <property type="term" value="F:ATP-dependent DNA damage sensor activity"/>
    <property type="evidence" value="ECO:0007669"/>
    <property type="project" value="InterPro"/>
</dbReference>
<dbReference type="GO" id="GO:0003684">
    <property type="term" value="F:damaged DNA binding"/>
    <property type="evidence" value="ECO:0007669"/>
    <property type="project" value="UniProtKB-UniRule"/>
</dbReference>
<dbReference type="GO" id="GO:0003697">
    <property type="term" value="F:single-stranded DNA binding"/>
    <property type="evidence" value="ECO:0007669"/>
    <property type="project" value="UniProtKB-UniRule"/>
</dbReference>
<dbReference type="GO" id="GO:0006310">
    <property type="term" value="P:DNA recombination"/>
    <property type="evidence" value="ECO:0007669"/>
    <property type="project" value="UniProtKB-UniRule"/>
</dbReference>
<dbReference type="GO" id="GO:0006281">
    <property type="term" value="P:DNA repair"/>
    <property type="evidence" value="ECO:0007669"/>
    <property type="project" value="UniProtKB-UniRule"/>
</dbReference>
<dbReference type="GO" id="GO:0009432">
    <property type="term" value="P:SOS response"/>
    <property type="evidence" value="ECO:0007669"/>
    <property type="project" value="UniProtKB-UniRule"/>
</dbReference>
<dbReference type="CDD" id="cd00983">
    <property type="entry name" value="RecA"/>
    <property type="match status" value="1"/>
</dbReference>
<dbReference type="FunFam" id="3.40.50.300:FF:000087">
    <property type="entry name" value="Recombinase RecA"/>
    <property type="match status" value="1"/>
</dbReference>
<dbReference type="Gene3D" id="3.40.50.300">
    <property type="entry name" value="P-loop containing nucleotide triphosphate hydrolases"/>
    <property type="match status" value="1"/>
</dbReference>
<dbReference type="HAMAP" id="MF_00268">
    <property type="entry name" value="RecA"/>
    <property type="match status" value="1"/>
</dbReference>
<dbReference type="InterPro" id="IPR003593">
    <property type="entry name" value="AAA+_ATPase"/>
</dbReference>
<dbReference type="InterPro" id="IPR013765">
    <property type="entry name" value="DNA_recomb/repair_RecA"/>
</dbReference>
<dbReference type="InterPro" id="IPR020584">
    <property type="entry name" value="DNA_recomb/repair_RecA_CS"/>
</dbReference>
<dbReference type="InterPro" id="IPR027417">
    <property type="entry name" value="P-loop_NTPase"/>
</dbReference>
<dbReference type="InterPro" id="IPR049261">
    <property type="entry name" value="RecA-like_C"/>
</dbReference>
<dbReference type="InterPro" id="IPR049428">
    <property type="entry name" value="RecA-like_N"/>
</dbReference>
<dbReference type="InterPro" id="IPR020588">
    <property type="entry name" value="RecA_ATP-bd"/>
</dbReference>
<dbReference type="InterPro" id="IPR023400">
    <property type="entry name" value="RecA_C_sf"/>
</dbReference>
<dbReference type="InterPro" id="IPR020587">
    <property type="entry name" value="RecA_monomer-monomer_interface"/>
</dbReference>
<dbReference type="NCBIfam" id="TIGR02012">
    <property type="entry name" value="tigrfam_recA"/>
    <property type="match status" value="1"/>
</dbReference>
<dbReference type="PANTHER" id="PTHR45900:SF1">
    <property type="entry name" value="MITOCHONDRIAL DNA REPAIR PROTEIN RECA HOMOLOG-RELATED"/>
    <property type="match status" value="1"/>
</dbReference>
<dbReference type="PANTHER" id="PTHR45900">
    <property type="entry name" value="RECA"/>
    <property type="match status" value="1"/>
</dbReference>
<dbReference type="Pfam" id="PF00154">
    <property type="entry name" value="RecA"/>
    <property type="match status" value="1"/>
</dbReference>
<dbReference type="Pfam" id="PF21096">
    <property type="entry name" value="RecA_C"/>
    <property type="match status" value="1"/>
</dbReference>
<dbReference type="PRINTS" id="PR00142">
    <property type="entry name" value="RECA"/>
</dbReference>
<dbReference type="SMART" id="SM00382">
    <property type="entry name" value="AAA"/>
    <property type="match status" value="1"/>
</dbReference>
<dbReference type="SUPFAM" id="SSF52540">
    <property type="entry name" value="P-loop containing nucleoside triphosphate hydrolases"/>
    <property type="match status" value="1"/>
</dbReference>
<dbReference type="SUPFAM" id="SSF54752">
    <property type="entry name" value="RecA protein, C-terminal domain"/>
    <property type="match status" value="1"/>
</dbReference>
<dbReference type="PROSITE" id="PS00321">
    <property type="entry name" value="RECA_1"/>
    <property type="match status" value="1"/>
</dbReference>
<dbReference type="PROSITE" id="PS50162">
    <property type="entry name" value="RECA_2"/>
    <property type="match status" value="1"/>
</dbReference>
<dbReference type="PROSITE" id="PS50163">
    <property type="entry name" value="RECA_3"/>
    <property type="match status" value="1"/>
</dbReference>